<feature type="chain" id="PRO_0000053936" description="Voltage-dependent L-type calcium channel subunit alpha-1D">
    <location>
        <begin position="1"/>
        <end position="2203"/>
    </location>
</feature>
<feature type="topological domain" description="Cytoplasmic" evidence="5">
    <location>
        <begin position="1"/>
        <end position="126"/>
    </location>
</feature>
<feature type="transmembrane region" description="Helical; Name=S1 of repeat I" evidence="5">
    <location>
        <begin position="127"/>
        <end position="145"/>
    </location>
</feature>
<feature type="topological domain" description="Extracellular" evidence="5">
    <location>
        <begin position="146"/>
        <end position="163"/>
    </location>
</feature>
<feature type="transmembrane region" description="Helical; Name=S2 of repeat I" evidence="5">
    <location>
        <begin position="164"/>
        <end position="183"/>
    </location>
</feature>
<feature type="topological domain" description="Cytoplasmic" evidence="5">
    <location>
        <begin position="184"/>
        <end position="195"/>
    </location>
</feature>
<feature type="transmembrane region" description="Helical; Name=S3 of repeat I" evidence="5">
    <location>
        <begin position="196"/>
        <end position="214"/>
    </location>
</feature>
<feature type="topological domain" description="Extracellular" evidence="5">
    <location>
        <begin position="215"/>
        <end position="235"/>
    </location>
</feature>
<feature type="transmembrane region" description="Helical; Name=S4 of repeat I" evidence="5">
    <location>
        <begin position="236"/>
        <end position="254"/>
    </location>
</feature>
<feature type="topological domain" description="Cytoplasmic" evidence="5">
    <location>
        <begin position="255"/>
        <end position="273"/>
    </location>
</feature>
<feature type="transmembrane region" description="Helical; Name=S5 of repeat I" evidence="5">
    <location>
        <begin position="274"/>
        <end position="293"/>
    </location>
</feature>
<feature type="topological domain" description="Extracellular" evidence="5">
    <location>
        <begin position="294"/>
        <end position="381"/>
    </location>
</feature>
<feature type="transmembrane region" description="Helical; Name=S6 of repeat I" evidence="5">
    <location>
        <begin position="382"/>
        <end position="406"/>
    </location>
</feature>
<feature type="topological domain" description="Cytoplasmic" evidence="5">
    <location>
        <begin position="407"/>
        <end position="582"/>
    </location>
</feature>
<feature type="transmembrane region" description="Helical; Name=S1 of repeat II" evidence="5">
    <location>
        <begin position="583"/>
        <end position="602"/>
    </location>
</feature>
<feature type="topological domain" description="Extracellular" evidence="5">
    <location>
        <begin position="603"/>
        <end position="617"/>
    </location>
</feature>
<feature type="transmembrane region" description="Helical; Name=S2 of repeat II" evidence="5">
    <location>
        <begin position="618"/>
        <end position="636"/>
    </location>
</feature>
<feature type="topological domain" description="Cytoplasmic" evidence="5">
    <location>
        <begin position="637"/>
        <end position="644"/>
    </location>
</feature>
<feature type="transmembrane region" description="Helical; Name=S3 of repeat II" evidence="5">
    <location>
        <begin position="645"/>
        <end position="663"/>
    </location>
</feature>
<feature type="topological domain" description="Extracellular" evidence="5">
    <location>
        <begin position="664"/>
        <end position="673"/>
    </location>
</feature>
<feature type="transmembrane region" description="Helical; Name=S4 of repeat II" evidence="5">
    <location>
        <begin position="674"/>
        <end position="692"/>
    </location>
</feature>
<feature type="topological domain" description="Cytoplasmic" evidence="5">
    <location>
        <begin position="693"/>
        <end position="711"/>
    </location>
</feature>
<feature type="transmembrane region" description="Helical; Name=S5 of repeat II" evidence="5">
    <location>
        <begin position="712"/>
        <end position="732"/>
    </location>
</feature>
<feature type="topological domain" description="Extracellular" evidence="5">
    <location>
        <begin position="733"/>
        <end position="786"/>
    </location>
</feature>
<feature type="transmembrane region" description="Helical; Name=S6 of repeat II" evidence="5">
    <location>
        <begin position="787"/>
        <end position="811"/>
    </location>
</feature>
<feature type="topological domain" description="Cytoplasmic" evidence="5">
    <location>
        <begin position="812"/>
        <end position="945"/>
    </location>
</feature>
<feature type="transmembrane region" description="Helical; Name=S1 of repeat III" evidence="5">
    <location>
        <begin position="946"/>
        <end position="964"/>
    </location>
</feature>
<feature type="topological domain" description="Extracellular" evidence="5">
    <location>
        <begin position="965"/>
        <end position="980"/>
    </location>
</feature>
<feature type="transmembrane region" description="Helical; Name=S2 of repeat III" evidence="5">
    <location>
        <begin position="981"/>
        <end position="1000"/>
    </location>
</feature>
<feature type="topological domain" description="Cytoplasmic" evidence="5">
    <location>
        <begin position="1001"/>
        <end position="1012"/>
    </location>
</feature>
<feature type="transmembrane region" description="Helical; Name=S3 of repeat III" evidence="5">
    <location>
        <begin position="1013"/>
        <end position="1031"/>
    </location>
</feature>
<feature type="topological domain" description="Extracellular" evidence="5">
    <location>
        <begin position="1032"/>
        <end position="1037"/>
    </location>
</feature>
<feature type="transmembrane region" description="Helical; Name=S4 of repeat III" evidence="5">
    <location>
        <begin position="1038"/>
        <end position="1057"/>
    </location>
</feature>
<feature type="topological domain" description="Cytoplasmic" evidence="5">
    <location>
        <begin position="1058"/>
        <end position="1076"/>
    </location>
</feature>
<feature type="transmembrane region" description="Helical; Name=S5 of repeat III" evidence="5">
    <location>
        <begin position="1077"/>
        <end position="1096"/>
    </location>
</feature>
<feature type="topological domain" description="Extracellular" evidence="5">
    <location>
        <begin position="1097"/>
        <end position="1186"/>
    </location>
</feature>
<feature type="transmembrane region" description="Helical; Name=S6 of repeat III" evidence="5">
    <location>
        <begin position="1187"/>
        <end position="1207"/>
    </location>
</feature>
<feature type="topological domain" description="Cytoplasmic" evidence="5">
    <location>
        <begin position="1208"/>
        <end position="1264"/>
    </location>
</feature>
<feature type="transmembrane region" description="Helical; Name=S1 of repeat IV" evidence="5">
    <location>
        <begin position="1265"/>
        <end position="1283"/>
    </location>
</feature>
<feature type="topological domain" description="Extracellular" evidence="5">
    <location>
        <begin position="1284"/>
        <end position="1298"/>
    </location>
</feature>
<feature type="transmembrane region" description="Helical; Name=S2 of repeat IV" evidence="5">
    <location>
        <begin position="1299"/>
        <end position="1318"/>
    </location>
</feature>
<feature type="topological domain" description="Cytoplasmic" evidence="5">
    <location>
        <begin position="1319"/>
        <end position="1325"/>
    </location>
</feature>
<feature type="transmembrane region" description="Helical; Name=S3 of repeat IV" evidence="5">
    <location>
        <begin position="1326"/>
        <end position="1347"/>
    </location>
</feature>
<feature type="topological domain" description="Extracellular" evidence="5">
    <location>
        <begin position="1348"/>
        <end position="1357"/>
    </location>
</feature>
<feature type="transmembrane region" description="Helical; Name=S4 of repeat IV" evidence="5">
    <location>
        <begin position="1358"/>
        <end position="1377"/>
    </location>
</feature>
<feature type="topological domain" description="Cytoplasmic" evidence="5">
    <location>
        <begin position="1378"/>
        <end position="1396"/>
    </location>
</feature>
<feature type="transmembrane region" description="Helical; Name=S5 of repeat IV" evidence="5">
    <location>
        <begin position="1397"/>
        <end position="1416"/>
    </location>
</feature>
<feature type="topological domain" description="Extracellular" evidence="5">
    <location>
        <begin position="1417"/>
        <end position="1483"/>
    </location>
</feature>
<feature type="transmembrane region" description="Helical; Name=S6 of repeat IV" evidence="5">
    <location>
        <begin position="1484"/>
        <end position="1508"/>
    </location>
</feature>
<feature type="topological domain" description="Cytoplasmic" evidence="5">
    <location>
        <begin position="1509"/>
        <end position="2203"/>
    </location>
</feature>
<feature type="repeat" description="I">
    <location>
        <begin position="112"/>
        <end position="408"/>
    </location>
</feature>
<feature type="repeat" description="II">
    <location>
        <begin position="528"/>
        <end position="774"/>
    </location>
</feature>
<feature type="repeat" description="III">
    <location>
        <begin position="892"/>
        <end position="1174"/>
    </location>
</feature>
<feature type="repeat" description="IV">
    <location>
        <begin position="1211"/>
        <end position="1486"/>
    </location>
</feature>
<feature type="region of interest" description="Disordered" evidence="6">
    <location>
        <begin position="1"/>
        <end position="51"/>
    </location>
</feature>
<feature type="region of interest" description="Disordered" evidence="6">
    <location>
        <begin position="64"/>
        <end position="100"/>
    </location>
</feature>
<feature type="region of interest" description="Binding to the beta subunit" evidence="1">
    <location>
        <begin position="429"/>
        <end position="446"/>
    </location>
</feature>
<feature type="region of interest" description="Disordered" evidence="6">
    <location>
        <begin position="449"/>
        <end position="480"/>
    </location>
</feature>
<feature type="region of interest" description="Disordered" evidence="6">
    <location>
        <begin position="822"/>
        <end position="909"/>
    </location>
</feature>
<feature type="region of interest" description="Dihydropyridine binding" evidence="1">
    <location>
        <begin position="1134"/>
        <end position="1224"/>
    </location>
</feature>
<feature type="region of interest" description="Dihydropyridine binding" evidence="1">
    <location>
        <begin position="1464"/>
        <end position="1530"/>
    </location>
</feature>
<feature type="region of interest" description="Phenylalkylamine binding" evidence="1">
    <location>
        <begin position="1476"/>
        <end position="1519"/>
    </location>
</feature>
<feature type="region of interest" description="Disordered" evidence="6">
    <location>
        <begin position="1734"/>
        <end position="1766"/>
    </location>
</feature>
<feature type="region of interest" description="Disordered" evidence="6">
    <location>
        <begin position="1795"/>
        <end position="1816"/>
    </location>
</feature>
<feature type="region of interest" description="Disordered" evidence="6">
    <location>
        <begin position="1920"/>
        <end position="1963"/>
    </location>
</feature>
<feature type="region of interest" description="Disordered" evidence="6">
    <location>
        <begin position="2176"/>
        <end position="2195"/>
    </location>
</feature>
<feature type="compositionally biased region" description="Polar residues" evidence="6">
    <location>
        <begin position="38"/>
        <end position="51"/>
    </location>
</feature>
<feature type="compositionally biased region" description="Basic residues" evidence="6">
    <location>
        <begin position="82"/>
        <end position="93"/>
    </location>
</feature>
<feature type="compositionally biased region" description="Polar residues" evidence="6">
    <location>
        <begin position="463"/>
        <end position="479"/>
    </location>
</feature>
<feature type="compositionally biased region" description="Basic and acidic residues" evidence="6">
    <location>
        <begin position="824"/>
        <end position="849"/>
    </location>
</feature>
<feature type="compositionally biased region" description="Polar residues" evidence="6">
    <location>
        <begin position="850"/>
        <end position="861"/>
    </location>
</feature>
<feature type="compositionally biased region" description="Acidic residues" evidence="6">
    <location>
        <begin position="884"/>
        <end position="897"/>
    </location>
</feature>
<feature type="compositionally biased region" description="Polar residues" evidence="6">
    <location>
        <begin position="1795"/>
        <end position="1806"/>
    </location>
</feature>
<feature type="compositionally biased region" description="Acidic residues" evidence="6">
    <location>
        <begin position="2180"/>
        <end position="2195"/>
    </location>
</feature>
<feature type="binding site" evidence="3">
    <location>
        <position position="364"/>
    </location>
    <ligand>
        <name>Ca(2+)</name>
        <dbReference type="ChEBI" id="CHEBI:29108"/>
    </ligand>
</feature>
<feature type="binding site" evidence="3">
    <location>
        <position position="764"/>
    </location>
    <ligand>
        <name>Ca(2+)</name>
        <dbReference type="ChEBI" id="CHEBI:29108"/>
    </ligand>
</feature>
<feature type="binding site" evidence="3">
    <location>
        <position position="1160"/>
    </location>
    <ligand>
        <name>Ca(2+)</name>
        <dbReference type="ChEBI" id="CHEBI:29108"/>
    </ligand>
</feature>
<feature type="glycosylation site" description="N-linked (GlcNAc...) asparagine" evidence="5">
    <location>
        <position position="155"/>
    </location>
</feature>
<feature type="glycosylation site" description="N-linked (GlcNAc...) asparagine" evidence="5">
    <location>
        <position position="225"/>
    </location>
</feature>
<feature type="glycosylation site" description="N-linked (GlcNAc...) asparagine" evidence="5">
    <location>
        <position position="329"/>
    </location>
</feature>
<feature type="splice variant" id="VSP_000916" description="In isoform 8." evidence="10">
    <location>
        <begin position="481"/>
        <end position="492"/>
    </location>
</feature>
<feature type="splice variant" id="VSP_000917" description="In isoform 7." evidence="10">
    <location>
        <begin position="493"/>
        <end position="512"/>
    </location>
</feature>
<feature type="splice variant" id="VSP_000918" description="In isoform 9." evidence="12">
    <location>
        <begin position="1322"/>
        <end position="1392"/>
    </location>
</feature>
<feature type="splice variant" id="VSP_000919" description="In isoform 4 and isoform 10." evidence="9 12">
    <location>
        <begin position="1322"/>
        <end position="1349"/>
    </location>
</feature>
<feature type="splice variant" id="VSP_000920" description="In isoform 6." evidence="10">
    <original>GYFSDAWNTFDSLIVIGSIIDVALSEA</original>
    <variation>HYFTDAWNTFDALIVVGSVVDIAITEVN</variation>
    <location>
        <begin position="1322"/>
        <end position="1348"/>
    </location>
</feature>
<feature type="splice variant" id="VSP_000921" description="In isoform 6 and isoform 3." evidence="10 12">
    <original>D</original>
    <variation>DPSDSENIPLPTATPG</variation>
    <location>
        <position position="1349"/>
    </location>
</feature>
<feature type="splice variant" id="VSP_000922" description="In isoform 10 and isoform 5." evidence="12">
    <location>
        <begin position="1354"/>
        <end position="1368"/>
    </location>
</feature>
<feature type="splice variant" id="VSP_000923" description="In isoform 2." evidence="11">
    <original>DDEVTVGKFYATFLIQDYFRKFKKRKE</original>
    <variation>GNSRSGKSKAWWGNTLRRTPRSPYRRD</variation>
    <location>
        <begin position="1642"/>
        <end position="1668"/>
    </location>
</feature>
<feature type="splice variant" id="VSP_000924" description="In isoform 2." evidence="11">
    <location>
        <begin position="1669"/>
        <end position="2203"/>
    </location>
</feature>
<feature type="splice variant" id="VSP_000925" description="In isoform 13." evidence="10">
    <original>AGLRTL</original>
    <variation>MLERML</variation>
    <location>
        <begin position="1686"/>
        <end position="1691"/>
    </location>
</feature>
<feature type="splice variant" id="VSP_000926" description="In isoform 13." evidence="10">
    <location>
        <begin position="1692"/>
        <end position="2203"/>
    </location>
</feature>
<feature type="mutagenesis site" description="Loss of calcium-dependent inactivation related to the C-terminal lobe of calmodulin." evidence="7">
    <original>IQ</original>
    <variation>AA</variation>
    <location>
        <begin position="1656"/>
        <end position="1657"/>
    </location>
</feature>
<feature type="sequence conflict" description="In Ref. 2; AAA42015." evidence="13" ref="2">
    <original>D</original>
    <variation>N</variation>
    <location>
        <position position="124"/>
    </location>
</feature>
<feature type="sequence conflict" description="In Ref. 2; AAA42015." evidence="13" ref="2">
    <original>S</original>
    <variation>Y</variation>
    <location>
        <position position="183"/>
    </location>
</feature>
<feature type="sequence conflict" description="In Ref. 2; AAA42015." evidence="13" ref="2">
    <original>S</original>
    <variation>Y</variation>
    <location>
        <position position="192"/>
    </location>
</feature>
<feature type="sequence conflict" description="In Ref. 2." evidence="13" ref="2">
    <original>G</original>
    <variation>C</variation>
    <location>
        <position position="513"/>
    </location>
</feature>
<feature type="sequence conflict" description="In Ref. 2." evidence="13" ref="2">
    <location>
        <begin position="522"/>
        <end position="560"/>
    </location>
</feature>
<feature type="sequence conflict" description="In Ref. 5; AAA89156." evidence="13" ref="5">
    <original>W</original>
    <variation>R</variation>
    <location>
        <position position="1452"/>
    </location>
</feature>
<organism>
    <name type="scientific">Rattus norvegicus</name>
    <name type="common">Rat</name>
    <dbReference type="NCBI Taxonomy" id="10116"/>
    <lineage>
        <taxon>Eukaryota</taxon>
        <taxon>Metazoa</taxon>
        <taxon>Chordata</taxon>
        <taxon>Craniata</taxon>
        <taxon>Vertebrata</taxon>
        <taxon>Euteleostomi</taxon>
        <taxon>Mammalia</taxon>
        <taxon>Eutheria</taxon>
        <taxon>Euarchontoglires</taxon>
        <taxon>Glires</taxon>
        <taxon>Rodentia</taxon>
        <taxon>Myomorpha</taxon>
        <taxon>Muroidea</taxon>
        <taxon>Muridae</taxon>
        <taxon>Murinae</taxon>
        <taxon>Rattus</taxon>
    </lineage>
</organism>
<name>CAC1D_RAT</name>
<comment type="function">
    <text evidence="7 8">Voltage-sensitive calcium channels (VSCC) mediate the entry of calcium ions into excitable cells and are also involved in a variety of calcium-dependent processes, including muscle contraction, hormone or neurotransmitter release, gene expression, cell motility, cell division and cell death. The isoform alpha-1D gives rise to L-type calcium currents. Long-lasting (L-type) calcium channels belong to the 'high-voltage activated' (HVA) group. They are blocked by dihydropyridines (DHP), phenylalkylamines, and by benzothiazepines.</text>
</comment>
<comment type="function">
    <molecule>Isoform 1</molecule>
    <text evidence="8">Voltage-sensitive calcium channels (VSCC) mediate the entry of calcium ions into excitable cells and are also involved in a variety of calcium-dependent processes, including muscle contraction, hormone or neurotransmitter release, gene expression, cell motility, cell division and cell death. The isoform alpha-1D gives rise to L-type calcium currents.</text>
</comment>
<comment type="function">
    <molecule>Isoform 2</molecule>
    <text evidence="8">Voltage-sensitive calcium channels (VSCC) mediate the entry of calcium ions into excitable cells and are also involved in a variety of calcium-dependent processes, including muscle contraction, hormone or neurotransmitter release, gene expression, cell motility, cell division and cell death. The isoform alpha-1D gives rise to L-type calcium currents.</text>
</comment>
<comment type="catalytic activity">
    <reaction evidence="7">
        <text>Ca(2+)(in) = Ca(2+)(out)</text>
        <dbReference type="Rhea" id="RHEA:29671"/>
        <dbReference type="ChEBI" id="CHEBI:29108"/>
    </reaction>
</comment>
<comment type="catalytic activity">
    <molecule>Isoform 1</molecule>
    <reaction evidence="8">
        <text>Ca(2+)(in) = Ca(2+)(out)</text>
        <dbReference type="Rhea" id="RHEA:29671"/>
        <dbReference type="ChEBI" id="CHEBI:29108"/>
    </reaction>
</comment>
<comment type="catalytic activity">
    <molecule>Isoform 2</molecule>
    <reaction evidence="8">
        <text>Ca(2+)(in) = Ca(2+)(out)</text>
        <dbReference type="Rhea" id="RHEA:29671"/>
        <dbReference type="ChEBI" id="CHEBI:29108"/>
    </reaction>
</comment>
<comment type="subunit">
    <text evidence="2 4 7">Voltage-dependent calcium channels are multisubunit complexes, consisting of alpha-1, alpha-2, beta and delta subunits in a 1:1:1:1 ratio. The channel activity is directed by the pore-forming and voltage-sensitive alpha-1 subunit. In many cases, this subunit is sufficient to generate voltage-sensitive calcium channel activity. The auxiliary subunits beta and alpha-2/delta linked by a disulfide bridge regulate the channel activity. Interacts with CABP1 and CABP4, resulting in a near elimination of calcium-dependent inactivation of the channel. Interacts with RIMBP2 (By similarity).</text>
</comment>
<comment type="interaction">
    <interactant intactId="EBI-8072674">
        <id>P27732</id>
    </interactant>
    <interactant intactId="EBI-7090239">
        <id>O88871</id>
        <label>Gabbr2</label>
    </interactant>
    <organismsDiffer>false</organismsDiffer>
    <experiments>6</experiments>
</comment>
<comment type="interaction">
    <interactant intactId="EBI-8072674">
        <id>P27732</id>
    </interactant>
    <interactant intactId="EBI-20939146">
        <id>Q9QX74-7</id>
        <label>Shank2</label>
    </interactant>
    <organismsDiffer>false</organismsDiffer>
    <experiments>2</experiments>
</comment>
<comment type="subcellular location">
    <subcellularLocation>
        <location evidence="4">Membrane</location>
        <topology evidence="5">Multi-pass membrane protein</topology>
    </subcellularLocation>
</comment>
<comment type="alternative products">
    <event type="alternative splicing"/>
    <isoform>
        <id>P27732-1</id>
        <name>1</name>
        <name>CACN4A</name>
        <sequence type="displayed"/>
    </isoform>
    <isoform>
        <id>P27732-2</id>
        <name>2</name>
        <name>CACN4B</name>
        <sequence type="described" ref="VSP_000923 VSP_000924"/>
    </isoform>
    <isoform>
        <id>P27732-3</id>
        <name>3</name>
        <name>CACH3A</name>
        <name>RB48</name>
        <name>RBD-55</name>
        <sequence type="described" ref="VSP_000921"/>
    </isoform>
    <isoform>
        <id>P27732-4</id>
        <name>4</name>
        <name>Delta-IV-S3</name>
        <name>RKC6</name>
        <sequence type="described" ref="VSP_000919"/>
    </isoform>
    <isoform>
        <id>P27732-5</id>
        <name>5</name>
        <name>Delta-IV-S4</name>
        <sequence type="described" ref="VSP_000922"/>
    </isoform>
    <isoform>
        <id>P27732-6</id>
        <name>6</name>
        <name>RB9</name>
        <sequence type="described" ref="VSP_000920 VSP_000921"/>
    </isoform>
    <isoform>
        <id>P27732-7</id>
        <name>7</name>
        <name>RB11</name>
        <sequence type="described" ref="VSP_000917"/>
    </isoform>
    <isoform>
        <id>P27732-8</id>
        <name>8</name>
        <name>RB34</name>
        <sequence type="described" ref="VSP_000916"/>
    </isoform>
    <isoform>
        <id>P27732-9</id>
        <name>9</name>
        <name>RH1</name>
        <sequence type="described" ref="VSP_000918"/>
    </isoform>
    <isoform>
        <id>P27732-10</id>
        <name>10</name>
        <name>RH2</name>
        <sequence type="described" ref="VSP_000919 VSP_000922"/>
    </isoform>
    <isoform>
        <id>P27732-13</id>
        <name>11</name>
        <name>RKC5</name>
        <sequence type="not described"/>
    </isoform>
    <isoform>
        <id>P27732-14</id>
        <name>12</name>
        <name>ROB3</name>
        <sequence type="not described"/>
    </isoform>
    <isoform>
        <id>P27732-12</id>
        <name>13</name>
        <name>Truncated</name>
        <sequence type="described" ref="VSP_000925 VSP_000926"/>
    </isoform>
    <text>The region sequenced in isoforms ROB3 and RKC5 is identical to CACN4.</text>
</comment>
<comment type="tissue specificity">
    <text evidence="7">Expressed in brain, pancreatic islets and B-lymphocytes.</text>
</comment>
<comment type="domain">
    <text>Each of the four internal repeats contains five hydrophobic transmembrane segments (S1, S2, S3, S5, S6) and one positively charged transmembrane segment (S4). S4 segments probably represent the voltage-sensor and are characterized by a series of positively charged amino acids at every third position.</text>
</comment>
<comment type="similarity">
    <text evidence="13">Belongs to the calcium channel alpha-1 subunit (TC 1.A.1.11) family. CACNA1D subfamily.</text>
</comment>
<accession>P27732</accession>
<accession>O09022</accession>
<accession>O09023</accession>
<accession>O09024</accession>
<accession>Q01542</accession>
<accession>Q62691</accession>
<accession>Q62815</accession>
<accession>Q63491</accession>
<accession>Q63492</accession>
<dbReference type="EMBL" id="D38101">
    <property type="protein sequence ID" value="BAA07282.1"/>
    <property type="molecule type" value="mRNA"/>
</dbReference>
<dbReference type="EMBL" id="D38102">
    <property type="protein sequence ID" value="BAA07283.1"/>
    <property type="molecule type" value="mRNA"/>
</dbReference>
<dbReference type="EMBL" id="M57682">
    <property type="protein sequence ID" value="AAA42015.1"/>
    <property type="molecule type" value="mRNA"/>
</dbReference>
<dbReference type="EMBL" id="U14005">
    <property type="protein sequence ID" value="AAB60515.1"/>
    <property type="molecule type" value="Genomic_DNA"/>
</dbReference>
<dbReference type="EMBL" id="M99221">
    <property type="protein sequence ID" value="AAA40895.1"/>
    <property type="molecule type" value="mRNA"/>
</dbReference>
<dbReference type="EMBL" id="U31772">
    <property type="protein sequence ID" value="AAA89156.1"/>
    <property type="molecule type" value="mRNA"/>
</dbReference>
<dbReference type="EMBL" id="U49126">
    <property type="protein sequence ID" value="AAB61634.1"/>
    <property type="molecule type" value="mRNA"/>
</dbReference>
<dbReference type="EMBL" id="U49127">
    <property type="protein sequence ID" value="AAB61635.1"/>
    <property type="molecule type" value="mRNA"/>
</dbReference>
<dbReference type="EMBL" id="U49128">
    <property type="protein sequence ID" value="AAB61636.1"/>
    <property type="molecule type" value="mRNA"/>
</dbReference>
<dbReference type="PIR" id="JH0422">
    <property type="entry name" value="JH0422"/>
</dbReference>
<dbReference type="PIR" id="T42742">
    <property type="entry name" value="T42742"/>
</dbReference>
<dbReference type="RefSeq" id="NP_058994.1">
    <property type="nucleotide sequence ID" value="NM_017298.1"/>
</dbReference>
<dbReference type="SMR" id="P27732"/>
<dbReference type="BioGRID" id="248333">
    <property type="interactions" value="2"/>
</dbReference>
<dbReference type="CORUM" id="P27732"/>
<dbReference type="DIP" id="DIP-60740N"/>
<dbReference type="FunCoup" id="P27732">
    <property type="interactions" value="2657"/>
</dbReference>
<dbReference type="IntAct" id="P27732">
    <property type="interactions" value="5"/>
</dbReference>
<dbReference type="MINT" id="P27732"/>
<dbReference type="STRING" id="10116.ENSRNOP00000043046"/>
<dbReference type="BindingDB" id="P27732"/>
<dbReference type="ChEMBL" id="CHEMBL4132"/>
<dbReference type="DrugCentral" id="P27732"/>
<dbReference type="GuidetoPHARMACOLOGY" id="530"/>
<dbReference type="TCDB" id="1.A.1.11.1">
    <property type="family name" value="the voltage-gated ion channel (vic) superfamily"/>
</dbReference>
<dbReference type="GlyCosmos" id="P27732">
    <property type="glycosylation" value="3 sites, No reported glycans"/>
</dbReference>
<dbReference type="GlyGen" id="P27732">
    <property type="glycosylation" value="6 sites"/>
</dbReference>
<dbReference type="iPTMnet" id="P27732"/>
<dbReference type="PhosphoSitePlus" id="P27732"/>
<dbReference type="PaxDb" id="10116-ENSRNOP00000051407"/>
<dbReference type="ABCD" id="P27732">
    <property type="antibodies" value="2 sequenced antibodies"/>
</dbReference>
<dbReference type="AGR" id="RGD:70973"/>
<dbReference type="RGD" id="70973">
    <property type="gene designation" value="Cacna1d"/>
</dbReference>
<dbReference type="eggNOG" id="KOG2301">
    <property type="taxonomic scope" value="Eukaryota"/>
</dbReference>
<dbReference type="InParanoid" id="P27732"/>
<dbReference type="PhylomeDB" id="P27732"/>
<dbReference type="Reactome" id="R-RNO-422356">
    <property type="pathway name" value="Regulation of insulin secretion"/>
</dbReference>
<dbReference type="PRO" id="PR:P27732"/>
<dbReference type="Proteomes" id="UP000002494">
    <property type="component" value="Unplaced"/>
</dbReference>
<dbReference type="GO" id="GO:0016324">
    <property type="term" value="C:apical plasma membrane"/>
    <property type="evidence" value="ECO:0000314"/>
    <property type="project" value="RGD"/>
</dbReference>
<dbReference type="GO" id="GO:0009986">
    <property type="term" value="C:cell surface"/>
    <property type="evidence" value="ECO:0000314"/>
    <property type="project" value="RGD"/>
</dbReference>
<dbReference type="GO" id="GO:0098683">
    <property type="term" value="C:cochlear hair cell ribbon synapse"/>
    <property type="evidence" value="ECO:0000266"/>
    <property type="project" value="RGD"/>
</dbReference>
<dbReference type="GO" id="GO:0032590">
    <property type="term" value="C:dendrite membrane"/>
    <property type="evidence" value="ECO:0000314"/>
    <property type="project" value="RGD"/>
</dbReference>
<dbReference type="GO" id="GO:1990454">
    <property type="term" value="C:L-type voltage-gated calcium channel complex"/>
    <property type="evidence" value="ECO:0000266"/>
    <property type="project" value="RGD"/>
</dbReference>
<dbReference type="GO" id="GO:0043204">
    <property type="term" value="C:perikaryon"/>
    <property type="evidence" value="ECO:0000314"/>
    <property type="project" value="RGD"/>
</dbReference>
<dbReference type="GO" id="GO:0005886">
    <property type="term" value="C:plasma membrane"/>
    <property type="evidence" value="ECO:0000266"/>
    <property type="project" value="RGD"/>
</dbReference>
<dbReference type="GO" id="GO:0045211">
    <property type="term" value="C:postsynaptic membrane"/>
    <property type="evidence" value="ECO:0000314"/>
    <property type="project" value="SynGO"/>
</dbReference>
<dbReference type="GO" id="GO:0048787">
    <property type="term" value="C:presynaptic active zone membrane"/>
    <property type="evidence" value="ECO:0000266"/>
    <property type="project" value="RGD"/>
</dbReference>
<dbReference type="GO" id="GO:0150001">
    <property type="term" value="C:primary dendrite"/>
    <property type="evidence" value="ECO:0000314"/>
    <property type="project" value="RGD"/>
</dbReference>
<dbReference type="GO" id="GO:0042383">
    <property type="term" value="C:sarcolemma"/>
    <property type="evidence" value="ECO:0000314"/>
    <property type="project" value="RGD"/>
</dbReference>
<dbReference type="GO" id="GO:0005891">
    <property type="term" value="C:voltage-gated calcium channel complex"/>
    <property type="evidence" value="ECO:0000266"/>
    <property type="project" value="RGD"/>
</dbReference>
<dbReference type="GO" id="GO:0030018">
    <property type="term" value="C:Z disc"/>
    <property type="evidence" value="ECO:0000266"/>
    <property type="project" value="RGD"/>
</dbReference>
<dbReference type="GO" id="GO:0051393">
    <property type="term" value="F:alpha-actinin binding"/>
    <property type="evidence" value="ECO:0000266"/>
    <property type="project" value="RGD"/>
</dbReference>
<dbReference type="GO" id="GO:0030506">
    <property type="term" value="F:ankyrin binding"/>
    <property type="evidence" value="ECO:0000353"/>
    <property type="project" value="BHF-UCL"/>
</dbReference>
<dbReference type="GO" id="GO:0005262">
    <property type="term" value="F:calcium channel activity"/>
    <property type="evidence" value="ECO:0000266"/>
    <property type="project" value="RGD"/>
</dbReference>
<dbReference type="GO" id="GO:0008331">
    <property type="term" value="F:high voltage-gated calcium channel activity"/>
    <property type="evidence" value="ECO:0000314"/>
    <property type="project" value="RGD"/>
</dbReference>
<dbReference type="GO" id="GO:0046872">
    <property type="term" value="F:metal ion binding"/>
    <property type="evidence" value="ECO:0007669"/>
    <property type="project" value="UniProtKB-KW"/>
</dbReference>
<dbReference type="GO" id="GO:0030165">
    <property type="term" value="F:PDZ domain binding"/>
    <property type="evidence" value="ECO:0000314"/>
    <property type="project" value="RGD"/>
</dbReference>
<dbReference type="GO" id="GO:0005245">
    <property type="term" value="F:voltage-gated calcium channel activity"/>
    <property type="evidence" value="ECO:0000314"/>
    <property type="project" value="BHF-UCL"/>
</dbReference>
<dbReference type="GO" id="GO:0086007">
    <property type="term" value="F:voltage-gated calcium channel activity involved in cardiac muscle cell action potential"/>
    <property type="evidence" value="ECO:0000305"/>
    <property type="project" value="BHF-UCL"/>
</dbReference>
<dbReference type="GO" id="GO:0099626">
    <property type="term" value="F:voltage-gated calcium channel activity involved in regulation of presynaptic cytosolic calcium levels"/>
    <property type="evidence" value="ECO:0000266"/>
    <property type="project" value="RGD"/>
</dbReference>
<dbReference type="GO" id="GO:0086059">
    <property type="term" value="F:voltage-gated calcium channel activity involved SA node cell action potential"/>
    <property type="evidence" value="ECO:0000266"/>
    <property type="project" value="RGD"/>
</dbReference>
<dbReference type="GO" id="GO:0007188">
    <property type="term" value="P:adenylate cyclase-modulating G protein-coupled receptor signaling pathway"/>
    <property type="evidence" value="ECO:0000266"/>
    <property type="project" value="RGD"/>
</dbReference>
<dbReference type="GO" id="GO:0070509">
    <property type="term" value="P:calcium ion import"/>
    <property type="evidence" value="ECO:0000315"/>
    <property type="project" value="RGD"/>
</dbReference>
<dbReference type="GO" id="GO:0098703">
    <property type="term" value="P:calcium ion import across plasma membrane"/>
    <property type="evidence" value="ECO:0000318"/>
    <property type="project" value="GO_Central"/>
</dbReference>
<dbReference type="GO" id="GO:0070588">
    <property type="term" value="P:calcium ion transmembrane transport"/>
    <property type="evidence" value="ECO:0000266"/>
    <property type="project" value="RGD"/>
</dbReference>
<dbReference type="GO" id="GO:0006816">
    <property type="term" value="P:calcium ion transport"/>
    <property type="evidence" value="ECO:0000314"/>
    <property type="project" value="BHF-UCL"/>
</dbReference>
<dbReference type="GO" id="GO:0019722">
    <property type="term" value="P:calcium-mediated signaling"/>
    <property type="evidence" value="ECO:0000314"/>
    <property type="project" value="RGD"/>
</dbReference>
<dbReference type="GO" id="GO:0086002">
    <property type="term" value="P:cardiac muscle cell action potential involved in contraction"/>
    <property type="evidence" value="ECO:0000266"/>
    <property type="project" value="RGD"/>
</dbReference>
<dbReference type="GO" id="GO:1904646">
    <property type="term" value="P:cellular response to amyloid-beta"/>
    <property type="evidence" value="ECO:0000270"/>
    <property type="project" value="RGD"/>
</dbReference>
<dbReference type="GO" id="GO:0051649">
    <property type="term" value="P:establishment of localization in cell"/>
    <property type="evidence" value="ECO:0000266"/>
    <property type="project" value="RGD"/>
</dbReference>
<dbReference type="GO" id="GO:0007507">
    <property type="term" value="P:heart development"/>
    <property type="evidence" value="ECO:0000270"/>
    <property type="project" value="RGD"/>
</dbReference>
<dbReference type="GO" id="GO:0086012">
    <property type="term" value="P:membrane depolarization during cardiac muscle cell action potential"/>
    <property type="evidence" value="ECO:0000305"/>
    <property type="project" value="BHF-UCL"/>
</dbReference>
<dbReference type="GO" id="GO:0086046">
    <property type="term" value="P:membrane depolarization during SA node cell action potential"/>
    <property type="evidence" value="ECO:0000266"/>
    <property type="project" value="RGD"/>
</dbReference>
<dbReference type="GO" id="GO:0007613">
    <property type="term" value="P:memory"/>
    <property type="evidence" value="ECO:0000270"/>
    <property type="project" value="RGD"/>
</dbReference>
<dbReference type="GO" id="GO:0030001">
    <property type="term" value="P:metal ion transport"/>
    <property type="evidence" value="ECO:0000315"/>
    <property type="project" value="RGD"/>
</dbReference>
<dbReference type="GO" id="GO:0021554">
    <property type="term" value="P:optic nerve development"/>
    <property type="evidence" value="ECO:0000270"/>
    <property type="project" value="RGD"/>
</dbReference>
<dbReference type="GO" id="GO:0045762">
    <property type="term" value="P:positive regulation of adenylate cyclase activity"/>
    <property type="evidence" value="ECO:0000250"/>
    <property type="project" value="UniProtKB"/>
</dbReference>
<dbReference type="GO" id="GO:1904879">
    <property type="term" value="P:positive regulation of calcium ion transmembrane transport via high voltage-gated calcium channel"/>
    <property type="evidence" value="ECO:0000315"/>
    <property type="project" value="RGD"/>
</dbReference>
<dbReference type="GO" id="GO:0051928">
    <property type="term" value="P:positive regulation of calcium ion transport"/>
    <property type="evidence" value="ECO:0000266"/>
    <property type="project" value="RGD"/>
</dbReference>
<dbReference type="GO" id="GO:0035774">
    <property type="term" value="P:positive regulation of insulin secretion involved in cellular response to glucose stimulus"/>
    <property type="evidence" value="ECO:0000315"/>
    <property type="project" value="RGD"/>
</dbReference>
<dbReference type="GO" id="GO:1904181">
    <property type="term" value="P:positive regulation of membrane depolarization"/>
    <property type="evidence" value="ECO:0000314"/>
    <property type="project" value="RGD"/>
</dbReference>
<dbReference type="GO" id="GO:0060372">
    <property type="term" value="P:regulation of atrial cardiac muscle cell membrane repolarization"/>
    <property type="evidence" value="ECO:0000266"/>
    <property type="project" value="RGD"/>
</dbReference>
<dbReference type="GO" id="GO:0051924">
    <property type="term" value="P:regulation of calcium ion transport"/>
    <property type="evidence" value="ECO:0000314"/>
    <property type="project" value="BHF-UCL"/>
</dbReference>
<dbReference type="GO" id="GO:0086091">
    <property type="term" value="P:regulation of heart rate by cardiac conduction"/>
    <property type="evidence" value="ECO:0000266"/>
    <property type="project" value="RGD"/>
</dbReference>
<dbReference type="GO" id="GO:1901379">
    <property type="term" value="P:regulation of potassium ion transmembrane transport"/>
    <property type="evidence" value="ECO:0000266"/>
    <property type="project" value="RGD"/>
</dbReference>
<dbReference type="GO" id="GO:0032355">
    <property type="term" value="P:response to estradiol"/>
    <property type="evidence" value="ECO:0000270"/>
    <property type="project" value="RGD"/>
</dbReference>
<dbReference type="GO" id="GO:0007605">
    <property type="term" value="P:sensory perception of sound"/>
    <property type="evidence" value="ECO:0000266"/>
    <property type="project" value="RGD"/>
</dbReference>
<dbReference type="FunFam" id="1.10.287.70:FF:000007">
    <property type="entry name" value="Voltage-dependent L-type calcium channel subunit alpha"/>
    <property type="match status" value="1"/>
</dbReference>
<dbReference type="FunFam" id="1.10.287.70:FF:000009">
    <property type="entry name" value="Voltage-dependent L-type calcium channel subunit alpha"/>
    <property type="match status" value="1"/>
</dbReference>
<dbReference type="FunFam" id="1.10.287.70:FF:000021">
    <property type="entry name" value="Voltage-dependent L-type calcium channel subunit alpha"/>
    <property type="match status" value="1"/>
</dbReference>
<dbReference type="FunFam" id="1.20.120.350:FF:000001">
    <property type="entry name" value="Voltage-dependent L-type calcium channel subunit alpha"/>
    <property type="match status" value="1"/>
</dbReference>
<dbReference type="FunFam" id="1.20.120.350:FF:000006">
    <property type="entry name" value="Voltage-dependent L-type calcium channel subunit alpha"/>
    <property type="match status" value="1"/>
</dbReference>
<dbReference type="FunFam" id="1.20.120.350:FF:000010">
    <property type="entry name" value="Voltage-dependent L-type calcium channel subunit alpha"/>
    <property type="match status" value="1"/>
</dbReference>
<dbReference type="FunFam" id="1.20.120.350:FF:000027">
    <property type="entry name" value="Voltage-dependent L-type calcium channel subunit alpha"/>
    <property type="match status" value="1"/>
</dbReference>
<dbReference type="FunFam" id="1.10.238.10:FF:000063">
    <property type="entry name" value="Voltage-dependent N-type calcium channel subunit alpha"/>
    <property type="match status" value="1"/>
</dbReference>
<dbReference type="Gene3D" id="1.10.287.70">
    <property type="match status" value="4"/>
</dbReference>
<dbReference type="Gene3D" id="6.10.250.2180">
    <property type="match status" value="1"/>
</dbReference>
<dbReference type="Gene3D" id="6.10.250.2500">
    <property type="match status" value="1"/>
</dbReference>
<dbReference type="Gene3D" id="1.20.120.350">
    <property type="entry name" value="Voltage-gated potassium channels. Chain C"/>
    <property type="match status" value="4"/>
</dbReference>
<dbReference type="InterPro" id="IPR031688">
    <property type="entry name" value="CAC1F_C"/>
</dbReference>
<dbReference type="InterPro" id="IPR031649">
    <property type="entry name" value="GPHH_dom"/>
</dbReference>
<dbReference type="InterPro" id="IPR005821">
    <property type="entry name" value="Ion_trans_dom"/>
</dbReference>
<dbReference type="InterPro" id="IPR005452">
    <property type="entry name" value="LVDCC_a1dsu"/>
</dbReference>
<dbReference type="InterPro" id="IPR014873">
    <property type="entry name" value="VDCC_a1su_IQ"/>
</dbReference>
<dbReference type="InterPro" id="IPR050599">
    <property type="entry name" value="VDCC_alpha-1_subunit"/>
</dbReference>
<dbReference type="InterPro" id="IPR005446">
    <property type="entry name" value="VDCC_L_a1su"/>
</dbReference>
<dbReference type="InterPro" id="IPR002077">
    <property type="entry name" value="VDCCAlpha1"/>
</dbReference>
<dbReference type="InterPro" id="IPR027359">
    <property type="entry name" value="Volt_channel_dom_sf"/>
</dbReference>
<dbReference type="PANTHER" id="PTHR45628">
    <property type="entry name" value="VOLTAGE-DEPENDENT CALCIUM CHANNEL TYPE A SUBUNIT ALPHA-1"/>
    <property type="match status" value="1"/>
</dbReference>
<dbReference type="PANTHER" id="PTHR45628:SF11">
    <property type="entry name" value="VOLTAGE-DEPENDENT L-TYPE CALCIUM CHANNEL SUBUNIT ALPHA-1D"/>
    <property type="match status" value="1"/>
</dbReference>
<dbReference type="Pfam" id="PF08763">
    <property type="entry name" value="Ca_chan_IQ"/>
    <property type="match status" value="1"/>
</dbReference>
<dbReference type="Pfam" id="PF16885">
    <property type="entry name" value="CAC1F_C"/>
    <property type="match status" value="2"/>
</dbReference>
<dbReference type="Pfam" id="PF16905">
    <property type="entry name" value="GPHH"/>
    <property type="match status" value="1"/>
</dbReference>
<dbReference type="Pfam" id="PF00520">
    <property type="entry name" value="Ion_trans"/>
    <property type="match status" value="4"/>
</dbReference>
<dbReference type="PRINTS" id="PR00167">
    <property type="entry name" value="CACHANNEL"/>
</dbReference>
<dbReference type="PRINTS" id="PR01630">
    <property type="entry name" value="LVDCCALPHA1"/>
</dbReference>
<dbReference type="PRINTS" id="PR01636">
    <property type="entry name" value="LVDCCALPHA1D"/>
</dbReference>
<dbReference type="SMART" id="SM01062">
    <property type="entry name" value="Ca_chan_IQ"/>
    <property type="match status" value="1"/>
</dbReference>
<dbReference type="SUPFAM" id="SSF81324">
    <property type="entry name" value="Voltage-gated potassium channels"/>
    <property type="match status" value="4"/>
</dbReference>
<reference key="1">
    <citation type="journal article" date="1995" name="Mol. Endocrinol.">
        <title>Molecular diversity and functional characterization of voltage-dependent calcium channels (CACN4) expressed in pancreatic beta-cells.</title>
        <authorList>
            <person name="Ihara Y."/>
            <person name="Yamada Y."/>
            <person name="Fujii Y."/>
            <person name="Gonoi T."/>
            <person name="Yano H."/>
            <person name="Yasuda K."/>
            <person name="Inagaki N."/>
            <person name="Seino Y."/>
            <person name="Seino S."/>
        </authorList>
    </citation>
    <scope>NUCLEOTIDE SEQUENCE [MRNA] (ISOFORMS 1 AND 2)</scope>
    <scope>FUNCTION (ISOFORMS 1 AND 2)</scope>
    <scope>TRANSPORTER ACTIVITY (ISOFORMS 1 AND 2)</scope>
    <source>
        <tissue>Insulinoma</tissue>
    </source>
</reference>
<reference key="2">
    <citation type="journal article" date="1991" name="Neuron">
        <title>Molecular cloning of multiple subtypes of a novel rat brain isoform of the alpha-1 subunit of the voltage-dependent calcium channel.</title>
        <authorList>
            <person name="Hui A."/>
            <person name="Ellinor P.T."/>
            <person name="Krizanova O."/>
            <person name="Wang J.-J."/>
            <person name="Diebold R.J."/>
            <person name="Schwartz A."/>
        </authorList>
    </citation>
    <scope>NUCLEOTIDE SEQUENCE [MRNA] (ISOFORMS 3; 6; 7; 8 AND 13)</scope>
    <source>
        <tissue>Brain</tissue>
    </source>
</reference>
<reference key="3">
    <citation type="journal article" date="1995" name="Cell. Mol. Neurobiol.">
        <title>Transcriptional regulation of the neuronal L-type calcium channel alpha 1D subunit gene.</title>
        <authorList>
            <person name="Kamp T.J."/>
            <person name="Mitas M."/>
            <person name="Fields K.L."/>
            <person name="Asoh S."/>
            <person name="Chin H."/>
            <person name="Marban E."/>
            <person name="Nirenberg M."/>
        </authorList>
    </citation>
    <scope>NUCLEOTIDE SEQUENCE [GENOMIC DNA] OF 1-125</scope>
</reference>
<reference key="4">
    <citation type="journal article" date="1992" name="Proc. Natl. Acad. Sci. U.S.A.">
        <title>Molecular characterization and nephron distribution of a family of transcripts encoding the pore-forming subunit of Ca2+ channels in the kidney.</title>
        <authorList>
            <person name="Yu A.S.L."/>
            <person name="Hebert S.C."/>
            <person name="Brenner B.M."/>
            <person name="Lytton J."/>
        </authorList>
    </citation>
    <scope>NUCLEOTIDE SEQUENCE [MRNA] OF 1100-1410 (ISOFORMS 4 AND 11)</scope>
    <source>
        <tissue>Kidney</tissue>
    </source>
</reference>
<reference key="5">
    <citation type="journal article" date="1995" name="Proc. Natl. Acad. Sci. U.S.A.">
        <title>Multiple calcium channel transcripts in rat osteosarcoma cells: selective activation of alpha 1D isoform by parathyroid hormone.</title>
        <authorList>
            <person name="Barry E.L.R."/>
            <person name="Gesek F.A."/>
            <person name="Froehner S.C."/>
            <person name="Friedman P.A."/>
        </authorList>
    </citation>
    <scope>NUCLEOTIDE SEQUENCE [MRNA] OF 1218-1498 (ISOFORM 12)</scope>
    <source>
        <tissue>Osteosarcoma</tissue>
    </source>
</reference>
<reference key="6">
    <citation type="journal article" date="1997" name="Cell Calcium">
        <title>Novel variants of voltage-operated calcium channel alpha-1 subunit transcripts in a rat liver-derived cell line: deletion in the IVS4 voltage sensing region.</title>
        <authorList>
            <person name="Brereton H.M."/>
            <person name="Harland M.L."/>
            <person name="Froscio M."/>
            <person name="Petronijevic T."/>
            <person name="Barritt G.J."/>
        </authorList>
    </citation>
    <scope>NUCLEOTIDE SEQUENCE [MRNA] OF 1200-1493 (ISOFORMS 3; 4; 5; 9 AND 10)</scope>
    <source>
        <tissue>Hepatoma</tissue>
    </source>
</reference>
<reference key="7">
    <citation type="journal article" date="1990" name="Proc. Natl. Acad. Sci. U.S.A.">
        <title>Rat brain expresses a heterogeneous family of calcium channels.</title>
        <authorList>
            <person name="Snutch T.P."/>
            <person name="Leonard J.P."/>
            <person name="Gilbert M.M."/>
            <person name="Lester H.A."/>
            <person name="Davidson N."/>
        </authorList>
    </citation>
    <scope>NUCLEOTIDE SEQUENCE OF 1307-1479 (ISOFORM 3)</scope>
</reference>
<reference key="8">
    <citation type="journal article" date="2006" name="J. Neurosci.">
        <title>Switching of Ca2+-dependent inactivation of Ca(v)1.3 channels by calcium binding proteins of auditory hair cells.</title>
        <authorList>
            <person name="Yang P.S."/>
            <person name="Alseikhan B.A."/>
            <person name="Hiel H."/>
            <person name="Grant L."/>
            <person name="Mori M.X."/>
            <person name="Yang W."/>
            <person name="Fuchs P.A."/>
            <person name="Yue D.T."/>
        </authorList>
    </citation>
    <scope>FUNCTION</scope>
    <scope>MUTAGENESIS OF 1656-ILE-GLN-1657</scope>
    <scope>INTERACTION WITH CABP1 AND CABP4</scope>
    <scope>TISSUE SPECIFICITY</scope>
    <scope>TRANSPORTER ACTIVITY</scope>
</reference>
<protein>
    <recommendedName>
        <fullName>Voltage-dependent L-type calcium channel subunit alpha-1D</fullName>
    </recommendedName>
    <alternativeName>
        <fullName>Calcium channel, L type, alpha-1 polypeptide, isoform 2</fullName>
    </alternativeName>
    <alternativeName>
        <fullName>Rat brain class D</fullName>
        <shortName>RBD</shortName>
    </alternativeName>
    <alternativeName>
        <fullName>Voltage-gated calcium channel subunit alpha Cav1.3</fullName>
    </alternativeName>
</protein>
<keyword id="KW-0025">Alternative splicing</keyword>
<keyword id="KW-0106">Calcium</keyword>
<keyword id="KW-0107">Calcium channel</keyword>
<keyword id="KW-0109">Calcium transport</keyword>
<keyword id="KW-1015">Disulfide bond</keyword>
<keyword id="KW-0325">Glycoprotein</keyword>
<keyword id="KW-0407">Ion channel</keyword>
<keyword id="KW-0406">Ion transport</keyword>
<keyword id="KW-0472">Membrane</keyword>
<keyword id="KW-0479">Metal-binding</keyword>
<keyword id="KW-0597">Phosphoprotein</keyword>
<keyword id="KW-1185">Reference proteome</keyword>
<keyword id="KW-0677">Repeat</keyword>
<keyword id="KW-0812">Transmembrane</keyword>
<keyword id="KW-1133">Transmembrane helix</keyword>
<keyword id="KW-0813">Transport</keyword>
<keyword id="KW-0851">Voltage-gated channel</keyword>
<evidence type="ECO:0000250" key="1"/>
<evidence type="ECO:0000250" key="2">
    <source>
        <dbReference type="UniProtKB" id="O73700"/>
    </source>
</evidence>
<evidence type="ECO:0000250" key="3">
    <source>
        <dbReference type="UniProtKB" id="P07293"/>
    </source>
</evidence>
<evidence type="ECO:0000250" key="4">
    <source>
        <dbReference type="UniProtKB" id="Q01668"/>
    </source>
</evidence>
<evidence type="ECO:0000255" key="5"/>
<evidence type="ECO:0000256" key="6">
    <source>
        <dbReference type="SAM" id="MobiDB-lite"/>
    </source>
</evidence>
<evidence type="ECO:0000269" key="7">
    <source>
    </source>
</evidence>
<evidence type="ECO:0000269" key="8">
    <source>
    </source>
</evidence>
<evidence type="ECO:0000303" key="9">
    <source>
    </source>
</evidence>
<evidence type="ECO:0000303" key="10">
    <source>
    </source>
</evidence>
<evidence type="ECO:0000303" key="11">
    <source>
    </source>
</evidence>
<evidence type="ECO:0000303" key="12">
    <source>
    </source>
</evidence>
<evidence type="ECO:0000305" key="13"/>
<gene>
    <name type="primary">Cacna1d</name>
    <name type="synonym">Cach3</name>
    <name type="synonym">Cacn4</name>
    <name type="synonym">Cacnl1a2</name>
    <name type="synonym">Cchl1a2</name>
</gene>
<proteinExistence type="evidence at protein level"/>
<sequence>MMMMMMMKKMQHQRQQQEDHANEANYARGTRLPISGEGPTSQPNSSKQTVLSWQAAIDAARQAKAAQTMSTSAPPPVGSLSQRKRQQYAKSKKQGNSSNSRPARALFCLSLNNPIRRACISIVDWKPFDIFILLAIFANCVALAIYIPFPEDDSNSTNHNLEKVEYAFLIIFTVETFLKIIASGLLLHPNASVRNGWNLLDFVIVIVGLFSVILEQLTKETEGGNHSSGKSGGFDVKALRAFRVLRPLRLVSGVPSLQVVLNSIIKAMVPLLHIALLVLFVIIIYAIIGLELFIGKMHKTCFFADSDIVAEEDPAPCAFSGNGRQCAANGTECRSGWVGPNGGITNFDNFAFAMLTVFQCITMEGWTDVLYWVNDAIGWEWPWVYFVSLIILGSFFVLNLVLGVLSGEFSKEREKAKARGDFQKLREKQQLEEDLKGYLDWITQAEDIDPENEEEGGEEGKRNTSMPTSETESVNTENVSGEGETQGCCGSLWCWWKRRGAAKTGPSGCRRWGQAISKSKLRSHGAREALCVCRCSLESLVKLWTSRFSAHLQAAYVRPYSRRWRRWNRFNRRRCRAAVKSVTFYWLVIVLVFLNTLTISSEHYNQPDWLTQIQDIANKVLLALFTCEMLVKMYSLGLQAYFVSLFNRFDCFVVCGGITETILVELELMSPLGVSVFRCVRLLRIFKVTRHWTSLSNLVASLLNSMKSIASLLLLLFLFIIIFSLLGMQLFGGKFNFDETQTKRSTFDNFPQALLTVFQILTGEDWNAVMYDGIMAYGGPSSSGMIVCIYFIILFICGNYILLKLFLAIAVDNLADAESLNTAQKEEAEEKERKKIARKESLENKKNNKPEVNQIANSDNKVTIDDYQEEAEDKDPYPPCDVPVGEEEEEEEEDEPEVPAGPRPRRISELNMKEKIAPIPEGSAFFILSKTNPIRVGCHKLINHHIFTNLILVFIMLSSAALAAEDPIRSHSFRNTILGYFDYAFTAIFTVEILLKMTTFGAFLHKGAFCRNYFNLLDMLVVGVSLVSFGIQSSAISVVKILRVLRVLRPLRAINRAKGLKHVVQCVFVAIRTIGNIMIVTTLLQFMFACIGVQLFKGKFYRCTDEAKSNPEECRGLFILYKDGDVDSPVVRERIWQNSDFNFDNVLSAMMALFTVSTFEGWPALLYKAIDSNGENVGPVYNYRVEISIFFIIYIIIVAFFMMNIFVGFVIVTFQEQGEKEYKNCELDKNQRQCVEYALKARPLRRYIPKNPYQYKFWYVVNSSPFEYMMFVLIMLNTLCLAMQHYEQSKMFNDAMDILNMVFTGVFTVEMVLKVIAFKPKGYFSDAWNTFDSLIVIGSIIDVALSEADNSEESNRISITFFRLFRVMRLVKLLSRGEGIRTLLWTFIKSFQALPYVALLIAMLFFIYAVIGMQMFGKVAMRDNNQINRNNNFQTFPQAVLLLFRCATGEAWQEIMLACLPGKLCDPDSDYNPGEEYTCGSNFAIVYFISFYMLCAFLIINLFVAVIMDNFDYLTRDWSILGPHHLDEFKRIWSEYDPEAKGRIKHLDVVTLLRRIQPPLGFGKLCPHRVACKRLVAMNMPLNSDGTVMFNATLFALVRTALKIKTEGNLEQANEELRAVIKKIWKKTSMKLLDQVVPPAGDDEVTVGKFYATFLIQDYFRKFKKRKEQGLVGKYPAKNTTIALQAGLRTLHDIGPEIRRAISCDLQDDEPEDSKPEEEDVFKRNGALLGNYVNHVNSDRRESLQQTNTTHRPLHVQRPSIPPASDTEKPLFPPAGNSVCHNHHNHNSIGKQVPTSTNANLNNANMSKAAHGKRPSIGDLEHVSENGHYSYKHDRELQRRSSIKRTRYYETYIRSESGDEQLPTIFREDPEIHGYFRDPRCFGEQEYFSSEECCEDDSSPTWSRQNYSYYNRYPGSSMDFERPRGYHHPQGFLEDDDSPIGYDSRRSPRRRLLPPTPPSHRRSSFNFECLRRQNSQDDVLPSPALPHRAALPLHLMQQQIMAVAGLDSSKAQKYSPSHSTRSWATPPATPPYRDWTPCYTPLIQVDRSESMDQVNGSLPSLHRSSWYTDEPDISYRTFTPASLTVPSSFRNKNSDKQRSADSLVEAVLISEGLGRYARDPKFVSATKHEIADACDLTIDEMESAASTLLNGSVCPRANGDMGPISHRQDYELQDFGPGYSDEEPDPGREEEDLADEMICITTL</sequence>